<dbReference type="EMBL" id="AL939126">
    <property type="protein sequence ID" value="CAA15783.1"/>
    <property type="molecule type" value="Genomic_DNA"/>
</dbReference>
<dbReference type="PIR" id="T35671">
    <property type="entry name" value="T35671"/>
</dbReference>
<dbReference type="RefSeq" id="NP_630120.1">
    <property type="nucleotide sequence ID" value="NC_003888.3"/>
</dbReference>
<dbReference type="RefSeq" id="WP_011030592.1">
    <property type="nucleotide sequence ID" value="NZ_VNID01000007.1"/>
</dbReference>
<dbReference type="SMR" id="O50500"/>
<dbReference type="STRING" id="100226.gene:17763666"/>
<dbReference type="PaxDb" id="100226-SCO6006"/>
<dbReference type="KEGG" id="sco:SCO6006"/>
<dbReference type="PATRIC" id="fig|100226.15.peg.6104"/>
<dbReference type="eggNOG" id="COG1175">
    <property type="taxonomic scope" value="Bacteria"/>
</dbReference>
<dbReference type="HOGENOM" id="CLU_016047_0_0_11"/>
<dbReference type="InParanoid" id="O50500"/>
<dbReference type="OrthoDB" id="9782326at2"/>
<dbReference type="PhylomeDB" id="O50500"/>
<dbReference type="Proteomes" id="UP000001973">
    <property type="component" value="Chromosome"/>
</dbReference>
<dbReference type="GO" id="GO:0005886">
    <property type="term" value="C:plasma membrane"/>
    <property type="evidence" value="ECO:0007669"/>
    <property type="project" value="UniProtKB-SubCell"/>
</dbReference>
<dbReference type="GO" id="GO:0055085">
    <property type="term" value="P:transmembrane transport"/>
    <property type="evidence" value="ECO:0007669"/>
    <property type="project" value="InterPro"/>
</dbReference>
<dbReference type="CDD" id="cd06261">
    <property type="entry name" value="TM_PBP2"/>
    <property type="match status" value="1"/>
</dbReference>
<dbReference type="Gene3D" id="1.10.3720.10">
    <property type="entry name" value="MetI-like"/>
    <property type="match status" value="1"/>
</dbReference>
<dbReference type="InterPro" id="IPR051393">
    <property type="entry name" value="ABC_transporter_permease"/>
</dbReference>
<dbReference type="InterPro" id="IPR000515">
    <property type="entry name" value="MetI-like"/>
</dbReference>
<dbReference type="InterPro" id="IPR035906">
    <property type="entry name" value="MetI-like_sf"/>
</dbReference>
<dbReference type="PANTHER" id="PTHR30193">
    <property type="entry name" value="ABC TRANSPORTER PERMEASE PROTEIN"/>
    <property type="match status" value="1"/>
</dbReference>
<dbReference type="PANTHER" id="PTHR30193:SF41">
    <property type="entry name" value="DIACETYLCHITOBIOSE UPTAKE SYSTEM PERMEASE PROTEIN NGCF"/>
    <property type="match status" value="1"/>
</dbReference>
<dbReference type="Pfam" id="PF00528">
    <property type="entry name" value="BPD_transp_1"/>
    <property type="match status" value="1"/>
</dbReference>
<dbReference type="SUPFAM" id="SSF161098">
    <property type="entry name" value="MetI-like"/>
    <property type="match status" value="1"/>
</dbReference>
<dbReference type="PROSITE" id="PS50928">
    <property type="entry name" value="ABC_TM1"/>
    <property type="match status" value="1"/>
</dbReference>
<proteinExistence type="evidence at protein level"/>
<sequence length="353" mass="38014">MKDTIPTAETASRRPEPAARGGRPRRRKLTFDRVTFFLAFLGVPLAIFVIFVLIPFGQAIFWGMTDWRGFSPDYNFVGFDNFTKMFQDDIFLKALRNVALLAAFVPLVTLTLALGVAVAITLGGPSKGPVRGIRGASFYRIISFFPYVVPAIIVGLIWAQMYDPNAGLLNGVLTGLGLDQFDTFAWLGEKAAAMPAVMFVIVWGLVGFYAVLFIAAIKGVPGELYEAAKIDGAGRFRTTISITLPAIRDSVQTAYIYLGIAALDAFVYVQAMVPNGGPDNSTLTISQRLFNVAFAKQQFGYATAMGVVLAAVTLVFAALVFLVNRLTGGGEGESKRKAPGSRARRAAAKGGAR</sequence>
<protein>
    <recommendedName>
        <fullName evidence="6">Diacetylchitobiose uptake system permease protein NgcF</fullName>
    </recommendedName>
</protein>
<comment type="function">
    <text evidence="7">Part of the ABC transporter complex NgcEFG-MsiK involved in N,N'-diacetylchitobiose ((GlcNAc)2) uptake. Responsible for the translocation of the substrate across the membrane.</text>
</comment>
<comment type="subunit">
    <text evidence="7">The complex is composed of two ATP-binding proteins (MsiK), two transmembrane proteins (NgcF and NgcG) and a solute-binding protein (NgcE).</text>
</comment>
<comment type="subcellular location">
    <subcellularLocation>
        <location evidence="6">Cell membrane</location>
        <topology evidence="1">Multi-pass membrane protein</topology>
    </subcellularLocation>
</comment>
<comment type="induction">
    <text evidence="4">Constitutively expressed. Slightly induced by GlcNAc, (GlcNAc)2 and chitin. Repressed by DasR.</text>
</comment>
<comment type="similarity">
    <text evidence="6">Belongs to the binding-protein-dependent transport system permease family.</text>
</comment>
<gene>
    <name evidence="5" type="primary">ngcF</name>
    <name evidence="8" type="ordered locus">SCO6006</name>
</gene>
<evidence type="ECO:0000255" key="1"/>
<evidence type="ECO:0000255" key="2">
    <source>
        <dbReference type="PROSITE-ProRule" id="PRU00441"/>
    </source>
</evidence>
<evidence type="ECO:0000256" key="3">
    <source>
        <dbReference type="SAM" id="MobiDB-lite"/>
    </source>
</evidence>
<evidence type="ECO:0000269" key="4">
    <source>
    </source>
</evidence>
<evidence type="ECO:0000303" key="5">
    <source>
    </source>
</evidence>
<evidence type="ECO:0000305" key="6"/>
<evidence type="ECO:0000305" key="7">
    <source>
    </source>
</evidence>
<evidence type="ECO:0000312" key="8">
    <source>
        <dbReference type="EMBL" id="CAA15783.1"/>
    </source>
</evidence>
<organism>
    <name type="scientific">Streptomyces coelicolor (strain ATCC BAA-471 / A3(2) / M145)</name>
    <dbReference type="NCBI Taxonomy" id="100226"/>
    <lineage>
        <taxon>Bacteria</taxon>
        <taxon>Bacillati</taxon>
        <taxon>Actinomycetota</taxon>
        <taxon>Actinomycetes</taxon>
        <taxon>Kitasatosporales</taxon>
        <taxon>Streptomycetaceae</taxon>
        <taxon>Streptomyces</taxon>
        <taxon>Streptomyces albidoflavus group</taxon>
    </lineage>
</organism>
<name>NGCF_STRCO</name>
<feature type="chain" id="PRO_0000447876" description="Diacetylchitobiose uptake system permease protein NgcF">
    <location>
        <begin position="1"/>
        <end position="353"/>
    </location>
</feature>
<feature type="transmembrane region" description="Helical" evidence="1">
    <location>
        <begin position="36"/>
        <end position="56"/>
    </location>
</feature>
<feature type="transmembrane region" description="Helical" evidence="1">
    <location>
        <begin position="100"/>
        <end position="120"/>
    </location>
</feature>
<feature type="transmembrane region" description="Helical" evidence="1">
    <location>
        <begin position="141"/>
        <end position="161"/>
    </location>
</feature>
<feature type="transmembrane region" description="Helical" evidence="1">
    <location>
        <begin position="197"/>
        <end position="217"/>
    </location>
</feature>
<feature type="transmembrane region" description="Helical" evidence="1">
    <location>
        <begin position="254"/>
        <end position="274"/>
    </location>
</feature>
<feature type="transmembrane region" description="Helical" evidence="1">
    <location>
        <begin position="303"/>
        <end position="323"/>
    </location>
</feature>
<feature type="domain" description="ABC transmembrane type-1" evidence="2">
    <location>
        <begin position="95"/>
        <end position="320"/>
    </location>
</feature>
<feature type="region of interest" description="Disordered" evidence="3">
    <location>
        <begin position="1"/>
        <end position="24"/>
    </location>
</feature>
<feature type="region of interest" description="Disordered" evidence="3">
    <location>
        <begin position="329"/>
        <end position="353"/>
    </location>
</feature>
<feature type="compositionally biased region" description="Basic residues" evidence="3">
    <location>
        <begin position="337"/>
        <end position="353"/>
    </location>
</feature>
<accession>O50500</accession>
<keyword id="KW-1003">Cell membrane</keyword>
<keyword id="KW-0472">Membrane</keyword>
<keyword id="KW-1185">Reference proteome</keyword>
<keyword id="KW-0762">Sugar transport</keyword>
<keyword id="KW-0812">Transmembrane</keyword>
<keyword id="KW-1133">Transmembrane helix</keyword>
<keyword id="KW-0813">Transport</keyword>
<reference key="1">
    <citation type="journal article" date="2002" name="Nature">
        <title>Complete genome sequence of the model actinomycete Streptomyces coelicolor A3(2).</title>
        <authorList>
            <person name="Bentley S.D."/>
            <person name="Chater K.F."/>
            <person name="Cerdeno-Tarraga A.-M."/>
            <person name="Challis G.L."/>
            <person name="Thomson N.R."/>
            <person name="James K.D."/>
            <person name="Harris D.E."/>
            <person name="Quail M.A."/>
            <person name="Kieser H."/>
            <person name="Harper D."/>
            <person name="Bateman A."/>
            <person name="Brown S."/>
            <person name="Chandra G."/>
            <person name="Chen C.W."/>
            <person name="Collins M."/>
            <person name="Cronin A."/>
            <person name="Fraser A."/>
            <person name="Goble A."/>
            <person name="Hidalgo J."/>
            <person name="Hornsby T."/>
            <person name="Howarth S."/>
            <person name="Huang C.-H."/>
            <person name="Kieser T."/>
            <person name="Larke L."/>
            <person name="Murphy L.D."/>
            <person name="Oliver K."/>
            <person name="O'Neil S."/>
            <person name="Rabbinowitsch E."/>
            <person name="Rajandream M.A."/>
            <person name="Rutherford K.M."/>
            <person name="Rutter S."/>
            <person name="Seeger K."/>
            <person name="Saunders D."/>
            <person name="Sharp S."/>
            <person name="Squares R."/>
            <person name="Squares S."/>
            <person name="Taylor K."/>
            <person name="Warren T."/>
            <person name="Wietzorrek A."/>
            <person name="Woodward J.R."/>
            <person name="Barrell B.G."/>
            <person name="Parkhill J."/>
            <person name="Hopwood D.A."/>
        </authorList>
    </citation>
    <scope>NUCLEOTIDE SEQUENCE [LARGE SCALE GENOMIC DNA]</scope>
    <source>
        <strain>ATCC BAA-471 / A3(2) / M145</strain>
    </source>
</reference>
<reference key="2">
    <citation type="journal article" date="2018" name="Microbes Environ.">
        <title>NgcESco acts as a lower-affinity binding protein of an ABC transporter for the uptake of N,N'-diacetylchitobiose in Streptomyces coelicolor A3(2).</title>
        <authorList>
            <person name="Iinuma C."/>
            <person name="Saito A."/>
            <person name="Ohnuma T."/>
            <person name="Tenconi E."/>
            <person name="Rosu A."/>
            <person name="Colson S."/>
            <person name="Mizutani Y."/>
            <person name="Liu F."/>
            <person name="Swiatek-Polatynska M."/>
            <person name="van Wezel G.P."/>
            <person name="Rigali S."/>
            <person name="Fujii T."/>
            <person name="Miyashita K."/>
        </authorList>
    </citation>
    <scope>FUNCTION</scope>
    <scope>SUBUNIT</scope>
    <scope>INDUCTION</scope>
    <source>
        <strain>ATCC BAA-471 / A3(2) / M145</strain>
    </source>
</reference>